<proteinExistence type="inferred from homology"/>
<protein>
    <recommendedName>
        <fullName evidence="1">tRNA(Ile)-lysidine synthase</fullName>
        <ecNumber evidence="1">6.3.4.19</ecNumber>
    </recommendedName>
    <alternativeName>
        <fullName evidence="1">tRNA(Ile)-2-lysyl-cytidine synthase</fullName>
    </alternativeName>
    <alternativeName>
        <fullName evidence="1">tRNA(Ile)-lysidine synthetase</fullName>
    </alternativeName>
</protein>
<name>TILS_RUEPO</name>
<evidence type="ECO:0000255" key="1">
    <source>
        <dbReference type="HAMAP-Rule" id="MF_01161"/>
    </source>
</evidence>
<sequence>MLLTIGAQDLVNHLRAQFSAQPPRRLGVAVSGGGDSVALMHLLARCFPRGEVKLCVATVDHGLRSESASEAALVARQAAGLGLPHETLLWTGWTGEGNLQDQARRARYGLLTDWALRNRVTTVALAHTADDQAETLLMRLGRSAGVSGLAAMAPRRMQDGVVLVRPLLGITRDALRDFLRAEGIAWAEDPSNEDIRYDRIKARQALAGLAPMGIDAQRLAEVAANMARAREALDWYTFLAARDLTRIDGGDVLLEPRGFRTLPDEIARRLLLHIVGWIGGGEYPPRRVAVAEALSALRHERSSQLGGCLILGQGRRIRFCREWKAVETLTVPQGALWDGRWVLRGPVVKDGELRALGAAGLKLCPDWRQTGRPYAALIASPSVWSGADLVAAPLAGLANGWTAELESGEEDFYASLLSH</sequence>
<gene>
    <name evidence="1" type="primary">tilS</name>
    <name type="ordered locus">SPO3106</name>
</gene>
<comment type="function">
    <text evidence="1">Ligates lysine onto the cytidine present at position 34 of the AUA codon-specific tRNA(Ile) that contains the anticodon CAU, in an ATP-dependent manner. Cytidine is converted to lysidine, thus changing the amino acid specificity of the tRNA from methionine to isoleucine.</text>
</comment>
<comment type="catalytic activity">
    <reaction evidence="1">
        <text>cytidine(34) in tRNA(Ile2) + L-lysine + ATP = lysidine(34) in tRNA(Ile2) + AMP + diphosphate + H(+)</text>
        <dbReference type="Rhea" id="RHEA:43744"/>
        <dbReference type="Rhea" id="RHEA-COMP:10625"/>
        <dbReference type="Rhea" id="RHEA-COMP:10670"/>
        <dbReference type="ChEBI" id="CHEBI:15378"/>
        <dbReference type="ChEBI" id="CHEBI:30616"/>
        <dbReference type="ChEBI" id="CHEBI:32551"/>
        <dbReference type="ChEBI" id="CHEBI:33019"/>
        <dbReference type="ChEBI" id="CHEBI:82748"/>
        <dbReference type="ChEBI" id="CHEBI:83665"/>
        <dbReference type="ChEBI" id="CHEBI:456215"/>
        <dbReference type="EC" id="6.3.4.19"/>
    </reaction>
</comment>
<comment type="subcellular location">
    <subcellularLocation>
        <location evidence="1">Cytoplasm</location>
    </subcellularLocation>
</comment>
<comment type="domain">
    <text>The N-terminal region contains the highly conserved SGGXDS motif, predicted to be a P-loop motif involved in ATP binding.</text>
</comment>
<comment type="similarity">
    <text evidence="1">Belongs to the tRNA(Ile)-lysidine synthase family.</text>
</comment>
<reference key="1">
    <citation type="journal article" date="2004" name="Nature">
        <title>Genome sequence of Silicibacter pomeroyi reveals adaptations to the marine environment.</title>
        <authorList>
            <person name="Moran M.A."/>
            <person name="Buchan A."/>
            <person name="Gonzalez J.M."/>
            <person name="Heidelberg J.F."/>
            <person name="Whitman W.B."/>
            <person name="Kiene R.P."/>
            <person name="Henriksen J.R."/>
            <person name="King G.M."/>
            <person name="Belas R."/>
            <person name="Fuqua C."/>
            <person name="Brinkac L.M."/>
            <person name="Lewis M."/>
            <person name="Johri S."/>
            <person name="Weaver B."/>
            <person name="Pai G."/>
            <person name="Eisen J.A."/>
            <person name="Rahe E."/>
            <person name="Sheldon W.M."/>
            <person name="Ye W."/>
            <person name="Miller T.R."/>
            <person name="Carlton J."/>
            <person name="Rasko D.A."/>
            <person name="Paulsen I.T."/>
            <person name="Ren Q."/>
            <person name="Daugherty S.C."/>
            <person name="DeBoy R.T."/>
            <person name="Dodson R.J."/>
            <person name="Durkin A.S."/>
            <person name="Madupu R."/>
            <person name="Nelson W.C."/>
            <person name="Sullivan S.A."/>
            <person name="Rosovitz M.J."/>
            <person name="Haft D.H."/>
            <person name="Selengut J."/>
            <person name="Ward N."/>
        </authorList>
    </citation>
    <scope>NUCLEOTIDE SEQUENCE [LARGE SCALE GENOMIC DNA]</scope>
    <source>
        <strain>ATCC 700808 / DSM 15171 / DSS-3</strain>
    </source>
</reference>
<reference key="2">
    <citation type="journal article" date="2014" name="Stand. Genomic Sci.">
        <title>An updated genome annotation for the model marine bacterium Ruegeria pomeroyi DSS-3.</title>
        <authorList>
            <person name="Rivers A.R."/>
            <person name="Smith C.B."/>
            <person name="Moran M.A."/>
        </authorList>
    </citation>
    <scope>GENOME REANNOTATION</scope>
    <source>
        <strain>ATCC 700808 / DSM 15171 / DSS-3</strain>
    </source>
</reference>
<organism>
    <name type="scientific">Ruegeria pomeroyi (strain ATCC 700808 / DSM 15171 / DSS-3)</name>
    <name type="common">Silicibacter pomeroyi</name>
    <dbReference type="NCBI Taxonomy" id="246200"/>
    <lineage>
        <taxon>Bacteria</taxon>
        <taxon>Pseudomonadati</taxon>
        <taxon>Pseudomonadota</taxon>
        <taxon>Alphaproteobacteria</taxon>
        <taxon>Rhodobacterales</taxon>
        <taxon>Roseobacteraceae</taxon>
        <taxon>Ruegeria</taxon>
    </lineage>
</organism>
<keyword id="KW-0067">ATP-binding</keyword>
<keyword id="KW-0963">Cytoplasm</keyword>
<keyword id="KW-0436">Ligase</keyword>
<keyword id="KW-0547">Nucleotide-binding</keyword>
<keyword id="KW-1185">Reference proteome</keyword>
<keyword id="KW-0819">tRNA processing</keyword>
<dbReference type="EC" id="6.3.4.19" evidence="1"/>
<dbReference type="EMBL" id="CP000031">
    <property type="protein sequence ID" value="AAV96341.1"/>
    <property type="molecule type" value="Genomic_DNA"/>
</dbReference>
<dbReference type="RefSeq" id="WP_011048796.1">
    <property type="nucleotide sequence ID" value="NC_003911.12"/>
</dbReference>
<dbReference type="SMR" id="Q5LNU7"/>
<dbReference type="STRING" id="246200.SPO3106"/>
<dbReference type="PaxDb" id="246200-SPO3106"/>
<dbReference type="KEGG" id="sil:SPO3106"/>
<dbReference type="eggNOG" id="COG0037">
    <property type="taxonomic scope" value="Bacteria"/>
</dbReference>
<dbReference type="HOGENOM" id="CLU_018869_3_2_5"/>
<dbReference type="OrthoDB" id="9807403at2"/>
<dbReference type="Proteomes" id="UP000001023">
    <property type="component" value="Chromosome"/>
</dbReference>
<dbReference type="GO" id="GO:0005737">
    <property type="term" value="C:cytoplasm"/>
    <property type="evidence" value="ECO:0007669"/>
    <property type="project" value="UniProtKB-SubCell"/>
</dbReference>
<dbReference type="GO" id="GO:0005524">
    <property type="term" value="F:ATP binding"/>
    <property type="evidence" value="ECO:0007669"/>
    <property type="project" value="UniProtKB-UniRule"/>
</dbReference>
<dbReference type="GO" id="GO:0032267">
    <property type="term" value="F:tRNA(Ile)-lysidine synthase activity"/>
    <property type="evidence" value="ECO:0007669"/>
    <property type="project" value="UniProtKB-EC"/>
</dbReference>
<dbReference type="GO" id="GO:0006400">
    <property type="term" value="P:tRNA modification"/>
    <property type="evidence" value="ECO:0007669"/>
    <property type="project" value="UniProtKB-UniRule"/>
</dbReference>
<dbReference type="CDD" id="cd01992">
    <property type="entry name" value="TilS_N"/>
    <property type="match status" value="1"/>
</dbReference>
<dbReference type="Gene3D" id="3.40.50.620">
    <property type="entry name" value="HUPs"/>
    <property type="match status" value="1"/>
</dbReference>
<dbReference type="HAMAP" id="MF_01161">
    <property type="entry name" value="tRNA_Ile_lys_synt"/>
    <property type="match status" value="1"/>
</dbReference>
<dbReference type="InterPro" id="IPR014729">
    <property type="entry name" value="Rossmann-like_a/b/a_fold"/>
</dbReference>
<dbReference type="InterPro" id="IPR011063">
    <property type="entry name" value="TilS/TtcA_N"/>
</dbReference>
<dbReference type="InterPro" id="IPR012094">
    <property type="entry name" value="tRNA_Ile_lys_synt"/>
</dbReference>
<dbReference type="InterPro" id="IPR012795">
    <property type="entry name" value="tRNA_Ile_lys_synt_N"/>
</dbReference>
<dbReference type="NCBIfam" id="TIGR02432">
    <property type="entry name" value="lysidine_TilS_N"/>
    <property type="match status" value="1"/>
</dbReference>
<dbReference type="PANTHER" id="PTHR43033">
    <property type="entry name" value="TRNA(ILE)-LYSIDINE SYNTHASE-RELATED"/>
    <property type="match status" value="1"/>
</dbReference>
<dbReference type="PANTHER" id="PTHR43033:SF1">
    <property type="entry name" value="TRNA(ILE)-LYSIDINE SYNTHASE-RELATED"/>
    <property type="match status" value="1"/>
</dbReference>
<dbReference type="Pfam" id="PF01171">
    <property type="entry name" value="ATP_bind_3"/>
    <property type="match status" value="1"/>
</dbReference>
<dbReference type="SUPFAM" id="SSF52402">
    <property type="entry name" value="Adenine nucleotide alpha hydrolases-like"/>
    <property type="match status" value="1"/>
</dbReference>
<feature type="chain" id="PRO_0000181764" description="tRNA(Ile)-lysidine synthase">
    <location>
        <begin position="1"/>
        <end position="419"/>
    </location>
</feature>
<feature type="binding site" evidence="1">
    <location>
        <begin position="31"/>
        <end position="36"/>
    </location>
    <ligand>
        <name>ATP</name>
        <dbReference type="ChEBI" id="CHEBI:30616"/>
    </ligand>
</feature>
<accession>Q5LNU7</accession>